<accession>Q9X9Q7</accession>
<evidence type="ECO:0000250" key="1"/>
<evidence type="ECO:0000269" key="2">
    <source>
    </source>
</evidence>
<evidence type="ECO:0000269" key="3">
    <source ref="2"/>
</evidence>
<evidence type="ECO:0000305" key="4"/>
<organism>
    <name type="scientific">Sphingobium xenophagum</name>
    <dbReference type="NCBI Taxonomy" id="121428"/>
    <lineage>
        <taxon>Bacteria</taxon>
        <taxon>Pseudomonadati</taxon>
        <taxon>Pseudomonadota</taxon>
        <taxon>Alphaproteobacteria</taxon>
        <taxon>Sphingomonadales</taxon>
        <taxon>Sphingomonadaceae</taxon>
        <taxon>Sphingobium</taxon>
    </lineage>
</organism>
<protein>
    <recommendedName>
        <fullName>2-hydroxychromene-2-carboxylate isomerase</fullName>
        <shortName>HCCA isomerase</shortName>
        <ecNumber>5.99.1.4</ecNumber>
    </recommendedName>
</protein>
<proteinExistence type="evidence at protein level"/>
<comment type="function">
    <text evidence="2 3">Involved in the naphthalene and naphthalenesulfonate catabolic pathway. Catalyzes the reversible glutathione-dependent isomerization of 2-hydroxychromene-2-carboxylate (HCCA) to trans-O-hydroxybenzylidenepyruvate (THBPA). It can also use 2-hydroxybenzo[g]chromene-2-carboxylate as substrate.</text>
</comment>
<comment type="catalytic activity">
    <reaction evidence="3">
        <text>2-hydroxychromene-2-carboxylate = (3E)-4-(2-hydroxyphenyl)-2-oxobut-3-enoate</text>
        <dbReference type="Rhea" id="RHEA:27401"/>
        <dbReference type="ChEBI" id="CHEBI:59350"/>
        <dbReference type="ChEBI" id="CHEBI:59353"/>
        <dbReference type="EC" id="5.99.1.4"/>
    </reaction>
</comment>
<comment type="cofactor">
    <cofactor>
        <name>glutathione</name>
        <dbReference type="ChEBI" id="CHEBI:57925"/>
    </cofactor>
    <text>Glutathione seems to stabilize the enzyme, which loses activity rapidly in the absence of this compound.</text>
</comment>
<comment type="activity regulation">
    <text evidence="2">Activated by salicylate.</text>
</comment>
<comment type="similarity">
    <text evidence="4">Belongs to the GST superfamily. NadH family.</text>
</comment>
<reference key="1">
    <citation type="journal article" date="2006" name="Microbiology">
        <title>Identification and functional analysis of the genes for naphthalenesulfonate catabolism by Sphingomonas xenophaga BN6.</title>
        <authorList>
            <person name="Keck A."/>
            <person name="Conradt D."/>
            <person name="Mahler A."/>
            <person name="Stolz A."/>
            <person name="Mattes R."/>
            <person name="Klein J."/>
        </authorList>
    </citation>
    <scope>NUCLEOTIDE SEQUENCE [GENOMIC DNA]</scope>
    <scope>FUNCTION</scope>
    <scope>ACTIVITY REGULATION</scope>
    <source>
        <strain>DSM 6383 / KCTC 2978 / NBRC 107872 / BN6</strain>
    </source>
</reference>
<reference key="2">
    <citation type="journal article" date="1993" name="Biodegradation">
        <title>2-Hydroxychromene-2-carboxylate isomerase from bacteria that degrade naphthalenesulfonates.</title>
        <authorList>
            <person name="Kuhm A.E."/>
            <person name="Knackmuss H.-J."/>
            <person name="Stolz A."/>
        </authorList>
    </citation>
    <scope>FUNCTION</scope>
    <scope>CATALYTIC ACTIVITY</scope>
    <scope>SUBSTRATE SPECIFICITY</scope>
    <source>
        <strain>DSM 6383 / KCTC 2978 / NBRC 107872 / BN6</strain>
    </source>
</reference>
<dbReference type="EC" id="5.99.1.4"/>
<dbReference type="EMBL" id="U65001">
    <property type="protein sequence ID" value="AAD45416.1"/>
    <property type="molecule type" value="Genomic_DNA"/>
</dbReference>
<dbReference type="SMR" id="Q9X9Q7"/>
<dbReference type="KEGG" id="ag:AAD45416"/>
<dbReference type="BRENDA" id="5.99.1.4">
    <property type="organism ID" value="10830"/>
</dbReference>
<dbReference type="GO" id="GO:0018845">
    <property type="term" value="F:2-hydroxychromene-2-carboxylate isomerase activity"/>
    <property type="evidence" value="ECO:0000314"/>
    <property type="project" value="UniProtKB"/>
</dbReference>
<dbReference type="GO" id="GO:0004602">
    <property type="term" value="F:glutathione peroxidase activity"/>
    <property type="evidence" value="ECO:0007669"/>
    <property type="project" value="TreeGrafter"/>
</dbReference>
<dbReference type="GO" id="GO:0004364">
    <property type="term" value="F:glutathione transferase activity"/>
    <property type="evidence" value="ECO:0007669"/>
    <property type="project" value="TreeGrafter"/>
</dbReference>
<dbReference type="GO" id="GO:0006749">
    <property type="term" value="P:glutathione metabolic process"/>
    <property type="evidence" value="ECO:0007669"/>
    <property type="project" value="TreeGrafter"/>
</dbReference>
<dbReference type="GO" id="GO:1901170">
    <property type="term" value="P:naphthalene catabolic process"/>
    <property type="evidence" value="ECO:0000315"/>
    <property type="project" value="UniProtKB"/>
</dbReference>
<dbReference type="CDD" id="cd03022">
    <property type="entry name" value="DsbA_HCCA_Iso"/>
    <property type="match status" value="1"/>
</dbReference>
<dbReference type="FunFam" id="3.40.30.10:FF:000652">
    <property type="entry name" value="2-hydroxychromene-2-carboxylate isomerase"/>
    <property type="match status" value="1"/>
</dbReference>
<dbReference type="Gene3D" id="3.40.30.10">
    <property type="entry name" value="Glutaredoxin"/>
    <property type="match status" value="1"/>
</dbReference>
<dbReference type="InterPro" id="IPR001853">
    <property type="entry name" value="DSBA-like_thioredoxin_dom"/>
</dbReference>
<dbReference type="InterPro" id="IPR051924">
    <property type="entry name" value="GST_Kappa/NadH"/>
</dbReference>
<dbReference type="InterPro" id="IPR014440">
    <property type="entry name" value="HCCAis_GSTk"/>
</dbReference>
<dbReference type="InterPro" id="IPR044087">
    <property type="entry name" value="NahD-like"/>
</dbReference>
<dbReference type="InterPro" id="IPR036249">
    <property type="entry name" value="Thioredoxin-like_sf"/>
</dbReference>
<dbReference type="PANTHER" id="PTHR42943">
    <property type="entry name" value="GLUTATHIONE S-TRANSFERASE KAPPA"/>
    <property type="match status" value="1"/>
</dbReference>
<dbReference type="PANTHER" id="PTHR42943:SF2">
    <property type="entry name" value="GLUTATHIONE S-TRANSFERASE KAPPA 1"/>
    <property type="match status" value="1"/>
</dbReference>
<dbReference type="Pfam" id="PF01323">
    <property type="entry name" value="DSBA"/>
    <property type="match status" value="1"/>
</dbReference>
<dbReference type="PIRSF" id="PIRSF006386">
    <property type="entry name" value="HCCAis_GSTk"/>
    <property type="match status" value="1"/>
</dbReference>
<dbReference type="SUPFAM" id="SSF52833">
    <property type="entry name" value="Thioredoxin-like"/>
    <property type="match status" value="1"/>
</dbReference>
<sequence length="195" mass="22064">MTKTIDFYFDFISPFSYLAQVKLPDLARRTGCVIEYRPIDIPEAKIAAGNYGPSNREVVPKIKVMMADLERWAAKYEVPLTFPASFACSDWNCAALYARGQDQAEAFVTAAYHRIWGIGIDPRDQNELRGCAEDVGLDADALCEFVRSPAGQGEYRKARTQAYQRGVFGAPMMFVDDQIFWGNDRLDFLESYLLD</sequence>
<feature type="chain" id="PRO_0000423056" description="2-hydroxychromene-2-carboxylate isomerase">
    <location>
        <begin position="1"/>
        <end position="195"/>
    </location>
</feature>
<feature type="active site" description="Nucleophile" evidence="1">
    <location>
        <position position="13"/>
    </location>
</feature>
<feature type="binding site" evidence="1">
    <location>
        <position position="13"/>
    </location>
    <ligand>
        <name>glutathione</name>
        <dbReference type="ChEBI" id="CHEBI:57925"/>
    </ligand>
</feature>
<feature type="binding site" evidence="1">
    <location>
        <position position="45"/>
    </location>
    <ligand>
        <name>substrate</name>
    </ligand>
</feature>
<feature type="binding site" evidence="1">
    <location>
        <begin position="55"/>
        <end position="56"/>
    </location>
    <ligand>
        <name>substrate</name>
    </ligand>
</feature>
<feature type="binding site" evidence="1">
    <location>
        <begin position="181"/>
        <end position="184"/>
    </location>
    <ligand>
        <name>glutathione</name>
        <dbReference type="ChEBI" id="CHEBI:57925"/>
    </ligand>
</feature>
<keyword id="KW-0058">Aromatic hydrocarbons catabolism</keyword>
<keyword id="KW-0413">Isomerase</keyword>
<name>NSAD_SPHXE</name>
<gene>
    <name type="primary">nsaD</name>
</gene>